<gene>
    <name type="ordered locus">BR1411</name>
    <name type="ordered locus">BS1330_I1405</name>
</gene>
<protein>
    <recommendedName>
        <fullName evidence="1">UPF0303 protein BR1411/BS1330_I1405</fullName>
    </recommendedName>
</protein>
<name>Y1411_BRUSU</name>
<proteinExistence type="inferred from homology"/>
<sequence length="169" mass="18566">MAQGDDNKQAIGQIIRQEQALIFPSLNENDAFSLGQRIRDIAVKDKLGIAIDISLWDRRLFFAATAGATADNTEWLRRKFNVVRRFHVSTYRLVLEQNREDRMFAPYKALDVADYALAGGGFPIRVSGAGVIGAVIVSGLPQREDHNLVVRAVAEHVGQDPVALALPAA</sequence>
<dbReference type="EMBL" id="AE014291">
    <property type="protein sequence ID" value="AAN30324.1"/>
    <property type="molecule type" value="Genomic_DNA"/>
</dbReference>
<dbReference type="EMBL" id="CP002997">
    <property type="protein sequence ID" value="AEM18740.1"/>
    <property type="molecule type" value="Genomic_DNA"/>
</dbReference>
<dbReference type="RefSeq" id="WP_004690981.1">
    <property type="nucleotide sequence ID" value="NZ_KN046804.1"/>
</dbReference>
<dbReference type="SMR" id="Q8FZR2"/>
<dbReference type="KEGG" id="bms:BR1411"/>
<dbReference type="KEGG" id="bsi:BS1330_I1405"/>
<dbReference type="PATRIC" id="fig|204722.21.peg.895"/>
<dbReference type="HOGENOM" id="CLU_101036_2_2_5"/>
<dbReference type="PhylomeDB" id="Q8FZR2"/>
<dbReference type="Proteomes" id="UP000007104">
    <property type="component" value="Chromosome I"/>
</dbReference>
<dbReference type="Gene3D" id="3.30.450.150">
    <property type="entry name" value="Haem-degrading domain"/>
    <property type="match status" value="1"/>
</dbReference>
<dbReference type="HAMAP" id="MF_00761">
    <property type="entry name" value="UPF0303"/>
    <property type="match status" value="1"/>
</dbReference>
<dbReference type="InterPro" id="IPR005624">
    <property type="entry name" value="PduO/GlcC-like"/>
</dbReference>
<dbReference type="InterPro" id="IPR038084">
    <property type="entry name" value="PduO/GlcC-like_sf"/>
</dbReference>
<dbReference type="InterPro" id="IPR010371">
    <property type="entry name" value="YBR137W-like"/>
</dbReference>
<dbReference type="NCBIfam" id="NF002693">
    <property type="entry name" value="PRK02487.1-2"/>
    <property type="match status" value="1"/>
</dbReference>
<dbReference type="NCBIfam" id="NF002696">
    <property type="entry name" value="PRK02487.1-5"/>
    <property type="match status" value="1"/>
</dbReference>
<dbReference type="PANTHER" id="PTHR28255">
    <property type="match status" value="1"/>
</dbReference>
<dbReference type="PANTHER" id="PTHR28255:SF1">
    <property type="entry name" value="UPF0303 PROTEIN YBR137W"/>
    <property type="match status" value="1"/>
</dbReference>
<dbReference type="Pfam" id="PF03928">
    <property type="entry name" value="HbpS-like"/>
    <property type="match status" value="1"/>
</dbReference>
<dbReference type="PIRSF" id="PIRSF008757">
    <property type="entry name" value="UCP008757"/>
    <property type="match status" value="1"/>
</dbReference>
<dbReference type="SUPFAM" id="SSF143744">
    <property type="entry name" value="GlcG-like"/>
    <property type="match status" value="1"/>
</dbReference>
<comment type="similarity">
    <text evidence="1">Belongs to the UPF0303 family.</text>
</comment>
<evidence type="ECO:0000255" key="1">
    <source>
        <dbReference type="HAMAP-Rule" id="MF_00761"/>
    </source>
</evidence>
<organism>
    <name type="scientific">Brucella suis biovar 1 (strain 1330)</name>
    <dbReference type="NCBI Taxonomy" id="204722"/>
    <lineage>
        <taxon>Bacteria</taxon>
        <taxon>Pseudomonadati</taxon>
        <taxon>Pseudomonadota</taxon>
        <taxon>Alphaproteobacteria</taxon>
        <taxon>Hyphomicrobiales</taxon>
        <taxon>Brucellaceae</taxon>
        <taxon>Brucella/Ochrobactrum group</taxon>
        <taxon>Brucella</taxon>
    </lineage>
</organism>
<reference key="1">
    <citation type="journal article" date="2002" name="Proc. Natl. Acad. Sci. U.S.A.">
        <title>The Brucella suis genome reveals fundamental similarities between animal and plant pathogens and symbionts.</title>
        <authorList>
            <person name="Paulsen I.T."/>
            <person name="Seshadri R."/>
            <person name="Nelson K.E."/>
            <person name="Eisen J.A."/>
            <person name="Heidelberg J.F."/>
            <person name="Read T.D."/>
            <person name="Dodson R.J."/>
            <person name="Umayam L.A."/>
            <person name="Brinkac L.M."/>
            <person name="Beanan M.J."/>
            <person name="Daugherty S.C."/>
            <person name="DeBoy R.T."/>
            <person name="Durkin A.S."/>
            <person name="Kolonay J.F."/>
            <person name="Madupu R."/>
            <person name="Nelson W.C."/>
            <person name="Ayodeji B."/>
            <person name="Kraul M."/>
            <person name="Shetty J."/>
            <person name="Malek J.A."/>
            <person name="Van Aken S.E."/>
            <person name="Riedmuller S."/>
            <person name="Tettelin H."/>
            <person name="Gill S.R."/>
            <person name="White O."/>
            <person name="Salzberg S.L."/>
            <person name="Hoover D.L."/>
            <person name="Lindler L.E."/>
            <person name="Halling S.M."/>
            <person name="Boyle S.M."/>
            <person name="Fraser C.M."/>
        </authorList>
    </citation>
    <scope>NUCLEOTIDE SEQUENCE [LARGE SCALE GENOMIC DNA]</scope>
    <source>
        <strain>1330</strain>
    </source>
</reference>
<reference key="2">
    <citation type="journal article" date="2011" name="J. Bacteriol.">
        <title>Revised genome sequence of Brucella suis 1330.</title>
        <authorList>
            <person name="Tae H."/>
            <person name="Shallom S."/>
            <person name="Settlage R."/>
            <person name="Preston D."/>
            <person name="Adams L.G."/>
            <person name="Garner H.R."/>
        </authorList>
    </citation>
    <scope>NUCLEOTIDE SEQUENCE [LARGE SCALE GENOMIC DNA]</scope>
    <source>
        <strain>1330</strain>
    </source>
</reference>
<accession>Q8FZR2</accession>
<accession>G0KB94</accession>
<feature type="chain" id="PRO_0000208916" description="UPF0303 protein BR1411/BS1330_I1405">
    <location>
        <begin position="1"/>
        <end position="169"/>
    </location>
</feature>